<name>TRMB_PHOPR</name>
<feature type="chain" id="PRO_0000171370" description="tRNA (guanine-N(7)-)-methyltransferase">
    <location>
        <begin position="1"/>
        <end position="245"/>
    </location>
</feature>
<feature type="active site" evidence="1">
    <location>
        <position position="150"/>
    </location>
</feature>
<feature type="binding site" evidence="2">
    <location>
        <position position="75"/>
    </location>
    <ligand>
        <name>S-adenosyl-L-methionine</name>
        <dbReference type="ChEBI" id="CHEBI:59789"/>
    </ligand>
</feature>
<feature type="binding site" evidence="2">
    <location>
        <position position="100"/>
    </location>
    <ligand>
        <name>S-adenosyl-L-methionine</name>
        <dbReference type="ChEBI" id="CHEBI:59789"/>
    </ligand>
</feature>
<feature type="binding site" evidence="2">
    <location>
        <position position="127"/>
    </location>
    <ligand>
        <name>S-adenosyl-L-methionine</name>
        <dbReference type="ChEBI" id="CHEBI:59789"/>
    </ligand>
</feature>
<feature type="binding site" evidence="2">
    <location>
        <position position="150"/>
    </location>
    <ligand>
        <name>S-adenosyl-L-methionine</name>
        <dbReference type="ChEBI" id="CHEBI:59789"/>
    </ligand>
</feature>
<feature type="binding site" evidence="2">
    <location>
        <position position="154"/>
    </location>
    <ligand>
        <name>substrate</name>
    </ligand>
</feature>
<feature type="binding site" evidence="2">
    <location>
        <position position="186"/>
    </location>
    <ligand>
        <name>substrate</name>
    </ligand>
</feature>
<feature type="binding site" evidence="2">
    <location>
        <begin position="223"/>
        <end position="226"/>
    </location>
    <ligand>
        <name>substrate</name>
    </ligand>
</feature>
<proteinExistence type="inferred from homology"/>
<protein>
    <recommendedName>
        <fullName evidence="2">tRNA (guanine-N(7)-)-methyltransferase</fullName>
        <ecNumber evidence="2">2.1.1.33</ecNumber>
    </recommendedName>
    <alternativeName>
        <fullName evidence="2">tRNA (guanine(46)-N(7))-methyltransferase</fullName>
    </alternativeName>
    <alternativeName>
        <fullName evidence="2">tRNA(m7G46)-methyltransferase</fullName>
    </alternativeName>
</protein>
<gene>
    <name evidence="2" type="primary">trmB</name>
    <name type="ordered locus">PBPRA3152</name>
</gene>
<reference key="1">
    <citation type="journal article" date="2005" name="Science">
        <title>Life at depth: Photobacterium profundum genome sequence and expression analysis.</title>
        <authorList>
            <person name="Vezzi A."/>
            <person name="Campanaro S."/>
            <person name="D'Angelo M."/>
            <person name="Simonato F."/>
            <person name="Vitulo N."/>
            <person name="Lauro F.M."/>
            <person name="Cestaro A."/>
            <person name="Malacrida G."/>
            <person name="Simionati B."/>
            <person name="Cannata N."/>
            <person name="Romualdi C."/>
            <person name="Bartlett D.H."/>
            <person name="Valle G."/>
        </authorList>
    </citation>
    <scope>NUCLEOTIDE SEQUENCE [LARGE SCALE GENOMIC DNA]</scope>
    <source>
        <strain>ATCC BAA-1253 / SS9</strain>
    </source>
</reference>
<sequence>MSEVSKKSGDVTVTELTEDGKLVRKIRSFVRREGRLTKGQESAMDNNWSTMGIDFAQQMLDWKEVYNREAPIVLEIGFGMGASLVEMAKHAPEKDFIGIEVHSPGVGACLMGAEETGLTNLRVMCHDAVEVFDYMIPDGSLETVQLFFPDPWHKTRHHKRRIVQPAFAEMLRKKLKIGGTFHMATDWENYAEHMVEVMNAAPGYKNTATDGDYIARPDDRPLTKFEARGHRLGHGVWDMKYTRTE</sequence>
<organism>
    <name type="scientific">Photobacterium profundum (strain SS9)</name>
    <dbReference type="NCBI Taxonomy" id="298386"/>
    <lineage>
        <taxon>Bacteria</taxon>
        <taxon>Pseudomonadati</taxon>
        <taxon>Pseudomonadota</taxon>
        <taxon>Gammaproteobacteria</taxon>
        <taxon>Vibrionales</taxon>
        <taxon>Vibrionaceae</taxon>
        <taxon>Photobacterium</taxon>
    </lineage>
</organism>
<accession>Q6LML0</accession>
<evidence type="ECO:0000250" key="1"/>
<evidence type="ECO:0000255" key="2">
    <source>
        <dbReference type="HAMAP-Rule" id="MF_01057"/>
    </source>
</evidence>
<comment type="function">
    <text evidence="2">Catalyzes the formation of N(7)-methylguanine at position 46 (m7G46) in tRNA.</text>
</comment>
<comment type="catalytic activity">
    <reaction evidence="2">
        <text>guanosine(46) in tRNA + S-adenosyl-L-methionine = N(7)-methylguanosine(46) in tRNA + S-adenosyl-L-homocysteine</text>
        <dbReference type="Rhea" id="RHEA:42708"/>
        <dbReference type="Rhea" id="RHEA-COMP:10188"/>
        <dbReference type="Rhea" id="RHEA-COMP:10189"/>
        <dbReference type="ChEBI" id="CHEBI:57856"/>
        <dbReference type="ChEBI" id="CHEBI:59789"/>
        <dbReference type="ChEBI" id="CHEBI:74269"/>
        <dbReference type="ChEBI" id="CHEBI:74480"/>
        <dbReference type="EC" id="2.1.1.33"/>
    </reaction>
</comment>
<comment type="pathway">
    <text evidence="2">tRNA modification; N(7)-methylguanine-tRNA biosynthesis.</text>
</comment>
<comment type="similarity">
    <text evidence="2">Belongs to the class I-like SAM-binding methyltransferase superfamily. TrmB family.</text>
</comment>
<dbReference type="EC" id="2.1.1.33" evidence="2"/>
<dbReference type="EMBL" id="CR378673">
    <property type="protein sequence ID" value="CAG21467.1"/>
    <property type="molecule type" value="Genomic_DNA"/>
</dbReference>
<dbReference type="RefSeq" id="WP_011219722.1">
    <property type="nucleotide sequence ID" value="NC_006370.1"/>
</dbReference>
<dbReference type="SMR" id="Q6LML0"/>
<dbReference type="STRING" id="298386.PBPRA3152"/>
<dbReference type="KEGG" id="ppr:PBPRA3152"/>
<dbReference type="eggNOG" id="COG0220">
    <property type="taxonomic scope" value="Bacteria"/>
</dbReference>
<dbReference type="HOGENOM" id="CLU_050910_0_1_6"/>
<dbReference type="UniPathway" id="UPA00989"/>
<dbReference type="Proteomes" id="UP000000593">
    <property type="component" value="Chromosome 1"/>
</dbReference>
<dbReference type="GO" id="GO:0043527">
    <property type="term" value="C:tRNA methyltransferase complex"/>
    <property type="evidence" value="ECO:0007669"/>
    <property type="project" value="TreeGrafter"/>
</dbReference>
<dbReference type="GO" id="GO:0008176">
    <property type="term" value="F:tRNA (guanine(46)-N7)-methyltransferase activity"/>
    <property type="evidence" value="ECO:0007669"/>
    <property type="project" value="UniProtKB-UniRule"/>
</dbReference>
<dbReference type="FunFam" id="3.40.50.150:FF:000024">
    <property type="entry name" value="tRNA (guanine-N(7)-)-methyltransferase"/>
    <property type="match status" value="1"/>
</dbReference>
<dbReference type="Gene3D" id="3.40.50.150">
    <property type="entry name" value="Vaccinia Virus protein VP39"/>
    <property type="match status" value="1"/>
</dbReference>
<dbReference type="HAMAP" id="MF_01057">
    <property type="entry name" value="tRNA_methyltr_TrmB"/>
    <property type="match status" value="1"/>
</dbReference>
<dbReference type="InterPro" id="IPR029063">
    <property type="entry name" value="SAM-dependent_MTases_sf"/>
</dbReference>
<dbReference type="InterPro" id="IPR003358">
    <property type="entry name" value="tRNA_(Gua-N-7)_MeTrfase_Trmb"/>
</dbReference>
<dbReference type="InterPro" id="IPR055361">
    <property type="entry name" value="tRNA_methyltr_TrmB_bact"/>
</dbReference>
<dbReference type="NCBIfam" id="TIGR00091">
    <property type="entry name" value="tRNA (guanosine(46)-N7)-methyltransferase TrmB"/>
    <property type="match status" value="1"/>
</dbReference>
<dbReference type="PANTHER" id="PTHR23417">
    <property type="entry name" value="3-DEOXY-D-MANNO-OCTULOSONIC-ACID TRANSFERASE/TRNA GUANINE-N 7 - -METHYLTRANSFERASE"/>
    <property type="match status" value="1"/>
</dbReference>
<dbReference type="PANTHER" id="PTHR23417:SF14">
    <property type="entry name" value="PENTACOTRIPEPTIDE-REPEAT REGION OF PRORP DOMAIN-CONTAINING PROTEIN"/>
    <property type="match status" value="1"/>
</dbReference>
<dbReference type="Pfam" id="PF02390">
    <property type="entry name" value="Methyltransf_4"/>
    <property type="match status" value="1"/>
</dbReference>
<dbReference type="SUPFAM" id="SSF53335">
    <property type="entry name" value="S-adenosyl-L-methionine-dependent methyltransferases"/>
    <property type="match status" value="1"/>
</dbReference>
<dbReference type="PROSITE" id="PS51625">
    <property type="entry name" value="SAM_MT_TRMB"/>
    <property type="match status" value="1"/>
</dbReference>
<keyword id="KW-0489">Methyltransferase</keyword>
<keyword id="KW-1185">Reference proteome</keyword>
<keyword id="KW-0949">S-adenosyl-L-methionine</keyword>
<keyword id="KW-0808">Transferase</keyword>
<keyword id="KW-0819">tRNA processing</keyword>